<reference key="1">
    <citation type="journal article" date="2007" name="PLoS Biol.">
        <title>Evolution of symbiotic bacteria in the distal human intestine.</title>
        <authorList>
            <person name="Xu J."/>
            <person name="Mahowald M.A."/>
            <person name="Ley R.E."/>
            <person name="Lozupone C.A."/>
            <person name="Hamady M."/>
            <person name="Martens E.C."/>
            <person name="Henrissat B."/>
            <person name="Coutinho P.M."/>
            <person name="Minx P."/>
            <person name="Latreille P."/>
            <person name="Cordum H."/>
            <person name="Van Brunt A."/>
            <person name="Kim K."/>
            <person name="Fulton R.S."/>
            <person name="Fulton L.A."/>
            <person name="Clifton S.W."/>
            <person name="Wilson R.K."/>
            <person name="Knight R.D."/>
            <person name="Gordon J.I."/>
        </authorList>
    </citation>
    <scope>NUCLEOTIDE SEQUENCE [LARGE SCALE GENOMIC DNA]</scope>
    <source>
        <strain>ATCC 8482 / DSM 1447 / JCM 5826 / CCUG 4940 / NBRC 14291 / NCTC 11154</strain>
    </source>
</reference>
<proteinExistence type="inferred from homology"/>
<dbReference type="EC" id="4.4.1.21" evidence="1"/>
<dbReference type="EMBL" id="CP000139">
    <property type="protein sequence ID" value="ABR38590.1"/>
    <property type="molecule type" value="Genomic_DNA"/>
</dbReference>
<dbReference type="RefSeq" id="WP_005844440.1">
    <property type="nucleotide sequence ID" value="NZ_JANSWM010000124.1"/>
</dbReference>
<dbReference type="SMR" id="A6KYS6"/>
<dbReference type="STRING" id="435590.BVU_0895"/>
<dbReference type="PaxDb" id="435590-BVU_0895"/>
<dbReference type="GeneID" id="5301862"/>
<dbReference type="KEGG" id="bvu:BVU_0895"/>
<dbReference type="eggNOG" id="COG1854">
    <property type="taxonomic scope" value="Bacteria"/>
</dbReference>
<dbReference type="HOGENOM" id="CLU_107531_1_0_10"/>
<dbReference type="BioCyc" id="BVUL435590:G1G59-938-MONOMER"/>
<dbReference type="BRENDA" id="4.4.1.21">
    <property type="organism ID" value="776"/>
</dbReference>
<dbReference type="Proteomes" id="UP000002861">
    <property type="component" value="Chromosome"/>
</dbReference>
<dbReference type="GO" id="GO:0005506">
    <property type="term" value="F:iron ion binding"/>
    <property type="evidence" value="ECO:0007669"/>
    <property type="project" value="InterPro"/>
</dbReference>
<dbReference type="GO" id="GO:0043768">
    <property type="term" value="F:S-ribosylhomocysteine lyase activity"/>
    <property type="evidence" value="ECO:0007669"/>
    <property type="project" value="UniProtKB-UniRule"/>
</dbReference>
<dbReference type="GO" id="GO:0009372">
    <property type="term" value="P:quorum sensing"/>
    <property type="evidence" value="ECO:0007669"/>
    <property type="project" value="UniProtKB-UniRule"/>
</dbReference>
<dbReference type="Gene3D" id="3.30.1360.80">
    <property type="entry name" value="S-ribosylhomocysteinase (LuxS)"/>
    <property type="match status" value="1"/>
</dbReference>
<dbReference type="HAMAP" id="MF_00091">
    <property type="entry name" value="LuxS"/>
    <property type="match status" value="1"/>
</dbReference>
<dbReference type="InterPro" id="IPR037005">
    <property type="entry name" value="LuxS_sf"/>
</dbReference>
<dbReference type="InterPro" id="IPR011249">
    <property type="entry name" value="Metalloenz_LuxS/M16"/>
</dbReference>
<dbReference type="InterPro" id="IPR003815">
    <property type="entry name" value="S-ribosylhomocysteinase"/>
</dbReference>
<dbReference type="NCBIfam" id="NF002604">
    <property type="entry name" value="PRK02260.1-4"/>
    <property type="match status" value="1"/>
</dbReference>
<dbReference type="PANTHER" id="PTHR35799">
    <property type="entry name" value="S-RIBOSYLHOMOCYSTEINE LYASE"/>
    <property type="match status" value="1"/>
</dbReference>
<dbReference type="PANTHER" id="PTHR35799:SF1">
    <property type="entry name" value="S-RIBOSYLHOMOCYSTEINE LYASE"/>
    <property type="match status" value="1"/>
</dbReference>
<dbReference type="Pfam" id="PF02664">
    <property type="entry name" value="LuxS"/>
    <property type="match status" value="1"/>
</dbReference>
<dbReference type="PIRSF" id="PIRSF006160">
    <property type="entry name" value="AI2"/>
    <property type="match status" value="1"/>
</dbReference>
<dbReference type="PRINTS" id="PR01487">
    <property type="entry name" value="LUXSPROTEIN"/>
</dbReference>
<dbReference type="SUPFAM" id="SSF63411">
    <property type="entry name" value="LuxS/MPP-like metallohydrolase"/>
    <property type="match status" value="1"/>
</dbReference>
<keyword id="KW-0071">Autoinducer synthesis</keyword>
<keyword id="KW-0408">Iron</keyword>
<keyword id="KW-0456">Lyase</keyword>
<keyword id="KW-0479">Metal-binding</keyword>
<keyword id="KW-0673">Quorum sensing</keyword>
<sequence>MKTIPSFTIDHIRLLRGIYVSRKDEVGGETVTTFDIRMKEPNREPALGQGALHTIEHLAATYLRNHPIWSDKIVYWGPMGCLTGNYLLMKGDLKSEDIVELMQETFRFVADFEGEVPGAAPKDCGNYLLHDLPMAKWESAKYLHEVLEHMTKDNLYYPTKE</sequence>
<feature type="chain" id="PRO_1000004837" description="S-ribosylhomocysteine lyase">
    <location>
        <begin position="1"/>
        <end position="161"/>
    </location>
</feature>
<feature type="binding site" evidence="1">
    <location>
        <position position="53"/>
    </location>
    <ligand>
        <name>Fe cation</name>
        <dbReference type="ChEBI" id="CHEBI:24875"/>
    </ligand>
</feature>
<feature type="binding site" evidence="1">
    <location>
        <position position="57"/>
    </location>
    <ligand>
        <name>Fe cation</name>
        <dbReference type="ChEBI" id="CHEBI:24875"/>
    </ligand>
</feature>
<feature type="binding site" evidence="1">
    <location>
        <position position="124"/>
    </location>
    <ligand>
        <name>Fe cation</name>
        <dbReference type="ChEBI" id="CHEBI:24875"/>
    </ligand>
</feature>
<organism>
    <name type="scientific">Phocaeicola vulgatus (strain ATCC 8482 / DSM 1447 / JCM 5826 / CCUG 4940 / NBRC 14291 / NCTC 11154)</name>
    <name type="common">Bacteroides vulgatus</name>
    <dbReference type="NCBI Taxonomy" id="435590"/>
    <lineage>
        <taxon>Bacteria</taxon>
        <taxon>Pseudomonadati</taxon>
        <taxon>Bacteroidota</taxon>
        <taxon>Bacteroidia</taxon>
        <taxon>Bacteroidales</taxon>
        <taxon>Bacteroidaceae</taxon>
        <taxon>Phocaeicola</taxon>
    </lineage>
</organism>
<comment type="function">
    <text evidence="1">Involved in the synthesis of autoinducer 2 (AI-2) which is secreted by bacteria and is used to communicate both the cell density and the metabolic potential of the environment. The regulation of gene expression in response to changes in cell density is called quorum sensing. Catalyzes the transformation of S-ribosylhomocysteine (RHC) to homocysteine (HC) and 4,5-dihydroxy-2,3-pentadione (DPD).</text>
</comment>
<comment type="catalytic activity">
    <reaction evidence="1">
        <text>S-(5-deoxy-D-ribos-5-yl)-L-homocysteine = (S)-4,5-dihydroxypentane-2,3-dione + L-homocysteine</text>
        <dbReference type="Rhea" id="RHEA:17753"/>
        <dbReference type="ChEBI" id="CHEBI:29484"/>
        <dbReference type="ChEBI" id="CHEBI:58195"/>
        <dbReference type="ChEBI" id="CHEBI:58199"/>
        <dbReference type="EC" id="4.4.1.21"/>
    </reaction>
</comment>
<comment type="cofactor">
    <cofactor evidence="1">
        <name>Fe cation</name>
        <dbReference type="ChEBI" id="CHEBI:24875"/>
    </cofactor>
    <text evidence="1">Binds 1 Fe cation per subunit.</text>
</comment>
<comment type="subunit">
    <text evidence="1">Homodimer.</text>
</comment>
<comment type="similarity">
    <text evidence="1">Belongs to the LuxS family.</text>
</comment>
<evidence type="ECO:0000255" key="1">
    <source>
        <dbReference type="HAMAP-Rule" id="MF_00091"/>
    </source>
</evidence>
<protein>
    <recommendedName>
        <fullName evidence="1">S-ribosylhomocysteine lyase</fullName>
        <ecNumber evidence="1">4.4.1.21</ecNumber>
    </recommendedName>
    <alternativeName>
        <fullName evidence="1">AI-2 synthesis protein</fullName>
    </alternativeName>
    <alternativeName>
        <fullName evidence="1">Autoinducer-2 production protein LuxS</fullName>
    </alternativeName>
</protein>
<accession>A6KYS6</accession>
<name>LUXS_PHOV8</name>
<gene>
    <name evidence="1" type="primary">luxS</name>
    <name type="ordered locus">BVU_0895</name>
</gene>